<dbReference type="EMBL" id="AP009153">
    <property type="protein sequence ID" value="BAH39014.1"/>
    <property type="molecule type" value="Genomic_DNA"/>
</dbReference>
<dbReference type="RefSeq" id="WP_012683461.1">
    <property type="nucleotide sequence ID" value="NC_012489.1"/>
</dbReference>
<dbReference type="SMR" id="C1A4I9"/>
<dbReference type="STRING" id="379066.GAU_1972"/>
<dbReference type="KEGG" id="gau:GAU_1972"/>
<dbReference type="eggNOG" id="COG0203">
    <property type="taxonomic scope" value="Bacteria"/>
</dbReference>
<dbReference type="HOGENOM" id="CLU_074407_2_0_0"/>
<dbReference type="OrthoDB" id="9809073at2"/>
<dbReference type="Proteomes" id="UP000002209">
    <property type="component" value="Chromosome"/>
</dbReference>
<dbReference type="GO" id="GO:0022625">
    <property type="term" value="C:cytosolic large ribosomal subunit"/>
    <property type="evidence" value="ECO:0007669"/>
    <property type="project" value="TreeGrafter"/>
</dbReference>
<dbReference type="GO" id="GO:0003735">
    <property type="term" value="F:structural constituent of ribosome"/>
    <property type="evidence" value="ECO:0007669"/>
    <property type="project" value="InterPro"/>
</dbReference>
<dbReference type="GO" id="GO:0006412">
    <property type="term" value="P:translation"/>
    <property type="evidence" value="ECO:0007669"/>
    <property type="project" value="UniProtKB-UniRule"/>
</dbReference>
<dbReference type="FunFam" id="3.90.1030.10:FF:000001">
    <property type="entry name" value="50S ribosomal protein L17"/>
    <property type="match status" value="1"/>
</dbReference>
<dbReference type="Gene3D" id="3.90.1030.10">
    <property type="entry name" value="Ribosomal protein L17"/>
    <property type="match status" value="1"/>
</dbReference>
<dbReference type="HAMAP" id="MF_01368">
    <property type="entry name" value="Ribosomal_bL17"/>
    <property type="match status" value="1"/>
</dbReference>
<dbReference type="InterPro" id="IPR000456">
    <property type="entry name" value="Ribosomal_bL17"/>
</dbReference>
<dbReference type="InterPro" id="IPR047859">
    <property type="entry name" value="Ribosomal_bL17_CS"/>
</dbReference>
<dbReference type="InterPro" id="IPR036373">
    <property type="entry name" value="Ribosomal_bL17_sf"/>
</dbReference>
<dbReference type="NCBIfam" id="TIGR00059">
    <property type="entry name" value="L17"/>
    <property type="match status" value="1"/>
</dbReference>
<dbReference type="PANTHER" id="PTHR14413:SF16">
    <property type="entry name" value="LARGE RIBOSOMAL SUBUNIT PROTEIN BL17M"/>
    <property type="match status" value="1"/>
</dbReference>
<dbReference type="PANTHER" id="PTHR14413">
    <property type="entry name" value="RIBOSOMAL PROTEIN L17"/>
    <property type="match status" value="1"/>
</dbReference>
<dbReference type="Pfam" id="PF01196">
    <property type="entry name" value="Ribosomal_L17"/>
    <property type="match status" value="1"/>
</dbReference>
<dbReference type="SUPFAM" id="SSF64263">
    <property type="entry name" value="Prokaryotic ribosomal protein L17"/>
    <property type="match status" value="1"/>
</dbReference>
<dbReference type="PROSITE" id="PS01167">
    <property type="entry name" value="RIBOSOMAL_L17"/>
    <property type="match status" value="1"/>
</dbReference>
<proteinExistence type="inferred from homology"/>
<accession>C1A4I9</accession>
<sequence length="118" mass="13332">MRHRKANRQLRRTSEQRLALLRNLATSLIEQGAIETTEAKAKELRPFVEKLITKARTGTLHARRLAGKHVHKREAADKLFQELGPAFATRPGGYTRILKTGHRKGDGAEMARIELILS</sequence>
<evidence type="ECO:0000255" key="1">
    <source>
        <dbReference type="HAMAP-Rule" id="MF_01368"/>
    </source>
</evidence>
<evidence type="ECO:0000305" key="2"/>
<gene>
    <name evidence="1" type="primary">rplQ</name>
    <name type="ordered locus">GAU_1972</name>
</gene>
<comment type="subunit">
    <text evidence="1">Part of the 50S ribosomal subunit. Contacts protein L32.</text>
</comment>
<comment type="similarity">
    <text evidence="1">Belongs to the bacterial ribosomal protein bL17 family.</text>
</comment>
<feature type="chain" id="PRO_1000215008" description="Large ribosomal subunit protein bL17">
    <location>
        <begin position="1"/>
        <end position="118"/>
    </location>
</feature>
<name>RL17_GEMAT</name>
<protein>
    <recommendedName>
        <fullName evidence="1">Large ribosomal subunit protein bL17</fullName>
    </recommendedName>
    <alternativeName>
        <fullName evidence="2">50S ribosomal protein L17</fullName>
    </alternativeName>
</protein>
<keyword id="KW-1185">Reference proteome</keyword>
<keyword id="KW-0687">Ribonucleoprotein</keyword>
<keyword id="KW-0689">Ribosomal protein</keyword>
<reference key="1">
    <citation type="submission" date="2006-03" db="EMBL/GenBank/DDBJ databases">
        <title>Complete genome sequence of Gemmatimonas aurantiaca T-27 that represents a novel phylum Gemmatimonadetes.</title>
        <authorList>
            <person name="Takasaki K."/>
            <person name="Ichikawa N."/>
            <person name="Miura H."/>
            <person name="Matsushita S."/>
            <person name="Watanabe Y."/>
            <person name="Oguchi A."/>
            <person name="Ankai A."/>
            <person name="Yashiro I."/>
            <person name="Takahashi M."/>
            <person name="Terui Y."/>
            <person name="Fukui S."/>
            <person name="Yokoyama H."/>
            <person name="Tanikawa S."/>
            <person name="Hanada S."/>
            <person name="Kamagata Y."/>
            <person name="Fujita N."/>
        </authorList>
    </citation>
    <scope>NUCLEOTIDE SEQUENCE [LARGE SCALE GENOMIC DNA]</scope>
    <source>
        <strain>DSM 14586 / JCM 11422 / NBRC 100505 / T-27</strain>
    </source>
</reference>
<organism>
    <name type="scientific">Gemmatimonas aurantiaca (strain DSM 14586 / JCM 11422 / NBRC 100505 / T-27)</name>
    <dbReference type="NCBI Taxonomy" id="379066"/>
    <lineage>
        <taxon>Bacteria</taxon>
        <taxon>Pseudomonadati</taxon>
        <taxon>Gemmatimonadota</taxon>
        <taxon>Gemmatimonadia</taxon>
        <taxon>Gemmatimonadales</taxon>
        <taxon>Gemmatimonadaceae</taxon>
        <taxon>Gemmatimonas</taxon>
    </lineage>
</organism>